<sequence length="409" mass="42887">MAIEIKAPTFPESVADGTVATWHKKPGEAVKRDELIVDIETDKVVIEVLAEADGVLAEIIKNEGDTVLSNELLGKLNEGGAAAPAAPAAAAPAAAPAAQAAAPAAAGGDDAILSPAARKLAEEAGIDPNSIAGTGKGGRVTKEDVVAAVEAKKNAPAAPAKPAAPAAEAPIFAAGDRVEKRVPMTRLRAKVAERLVEAQSAMAMLTTFNEVNMKPIMDLRSKYKDLFEKKHNGVRLGFMSFFVKAATEALKRFPGVNASIDGNDIVYHGYQDIGVAVSSDRGLVVPVLRNAEFMSLAEIEGGIANFGKKAKEGKLTIEDMTGGTFTISNGGVFGSLLSTPIVNPPQTAILGMHKIQERPMAVNGQVVILPMMYLALSYDHRLIDGKEAVSFLVAIKDLLEDPARLLLDV</sequence>
<gene>
    <name type="primary">sucB</name>
    <name type="ordered locus">PA1586</name>
</gene>
<protein>
    <recommendedName>
        <fullName>Dihydrolipoyllysine-residue succinyltransferase component of 2-oxoglutarate dehydrogenase complex</fullName>
        <ecNumber evidence="2">2.3.1.61</ecNumber>
    </recommendedName>
    <alternativeName>
        <fullName>2-oxoglutarate dehydrogenase complex component E2</fullName>
        <shortName>OGDC-E2</shortName>
    </alternativeName>
    <alternativeName>
        <fullName>Dihydrolipoamide succinyltransferase component of 2-oxoglutarate dehydrogenase complex</fullName>
    </alternativeName>
</protein>
<organism>
    <name type="scientific">Pseudomonas aeruginosa (strain ATCC 15692 / DSM 22644 / CIP 104116 / JCM 14847 / LMG 12228 / 1C / PRS 101 / PAO1)</name>
    <dbReference type="NCBI Taxonomy" id="208964"/>
    <lineage>
        <taxon>Bacteria</taxon>
        <taxon>Pseudomonadati</taxon>
        <taxon>Pseudomonadota</taxon>
        <taxon>Gammaproteobacteria</taxon>
        <taxon>Pseudomonadales</taxon>
        <taxon>Pseudomonadaceae</taxon>
        <taxon>Pseudomonas</taxon>
    </lineage>
</organism>
<feature type="chain" id="PRO_0000287784" description="Dihydrolipoyllysine-residue succinyltransferase component of 2-oxoglutarate dehydrogenase complex">
    <location>
        <begin position="1"/>
        <end position="409"/>
    </location>
</feature>
<feature type="domain" description="Lipoyl-binding" evidence="3">
    <location>
        <begin position="2"/>
        <end position="77"/>
    </location>
</feature>
<feature type="domain" description="Peripheral subunit-binding (PSBD)" evidence="4">
    <location>
        <begin position="112"/>
        <end position="149"/>
    </location>
</feature>
<feature type="active site" evidence="2">
    <location>
        <position position="380"/>
    </location>
</feature>
<feature type="active site" evidence="2">
    <location>
        <position position="384"/>
    </location>
</feature>
<feature type="modified residue" description="N6-lipoyllysine" evidence="3">
    <location>
        <position position="43"/>
    </location>
</feature>
<evidence type="ECO:0000250" key="1"/>
<evidence type="ECO:0000250" key="2">
    <source>
        <dbReference type="UniProtKB" id="P0AFG6"/>
    </source>
</evidence>
<evidence type="ECO:0000255" key="3">
    <source>
        <dbReference type="PROSITE-ProRule" id="PRU01066"/>
    </source>
</evidence>
<evidence type="ECO:0000255" key="4">
    <source>
        <dbReference type="PROSITE-ProRule" id="PRU01170"/>
    </source>
</evidence>
<evidence type="ECO:0000305" key="5"/>
<proteinExistence type="inferred from homology"/>
<dbReference type="EC" id="2.3.1.61" evidence="2"/>
<dbReference type="EMBL" id="AE004091">
    <property type="protein sequence ID" value="AAG04975.1"/>
    <property type="molecule type" value="Genomic_DNA"/>
</dbReference>
<dbReference type="PIR" id="H83448">
    <property type="entry name" value="H83448"/>
</dbReference>
<dbReference type="RefSeq" id="NP_250277.1">
    <property type="nucleotide sequence ID" value="NC_002516.2"/>
</dbReference>
<dbReference type="SMR" id="Q9I3D2"/>
<dbReference type="FunCoup" id="Q9I3D2">
    <property type="interactions" value="747"/>
</dbReference>
<dbReference type="STRING" id="208964.PA1586"/>
<dbReference type="PaxDb" id="208964-PA1586"/>
<dbReference type="GeneID" id="881930"/>
<dbReference type="KEGG" id="pae:PA1586"/>
<dbReference type="PATRIC" id="fig|208964.12.peg.1645"/>
<dbReference type="PseudoCAP" id="PA1586"/>
<dbReference type="HOGENOM" id="CLU_016733_0_0_6"/>
<dbReference type="InParanoid" id="Q9I3D2"/>
<dbReference type="OrthoDB" id="9805770at2"/>
<dbReference type="PhylomeDB" id="Q9I3D2"/>
<dbReference type="BioCyc" id="PAER208964:G1FZ6-1616-MONOMER"/>
<dbReference type="UniPathway" id="UPA00868">
    <property type="reaction ID" value="UER00840"/>
</dbReference>
<dbReference type="Proteomes" id="UP000002438">
    <property type="component" value="Chromosome"/>
</dbReference>
<dbReference type="GO" id="GO:0005829">
    <property type="term" value="C:cytosol"/>
    <property type="evidence" value="ECO:0000318"/>
    <property type="project" value="GO_Central"/>
</dbReference>
<dbReference type="GO" id="GO:0045252">
    <property type="term" value="C:oxoglutarate dehydrogenase complex"/>
    <property type="evidence" value="ECO:0007669"/>
    <property type="project" value="InterPro"/>
</dbReference>
<dbReference type="GO" id="GO:0004149">
    <property type="term" value="F:dihydrolipoyllysine-residue succinyltransferase activity"/>
    <property type="evidence" value="ECO:0000318"/>
    <property type="project" value="GO_Central"/>
</dbReference>
<dbReference type="GO" id="GO:0033512">
    <property type="term" value="P:L-lysine catabolic process to acetyl-CoA via saccharopine"/>
    <property type="evidence" value="ECO:0007669"/>
    <property type="project" value="UniProtKB-UniPathway"/>
</dbReference>
<dbReference type="GO" id="GO:0006099">
    <property type="term" value="P:tricarboxylic acid cycle"/>
    <property type="evidence" value="ECO:0000318"/>
    <property type="project" value="GO_Central"/>
</dbReference>
<dbReference type="CDD" id="cd06849">
    <property type="entry name" value="lipoyl_domain"/>
    <property type="match status" value="1"/>
</dbReference>
<dbReference type="FunFam" id="3.30.559.10:FF:000007">
    <property type="entry name" value="Dihydrolipoamide acetyltransferase component of pyruvate dehydrogenase complex"/>
    <property type="match status" value="1"/>
</dbReference>
<dbReference type="Gene3D" id="2.40.50.100">
    <property type="match status" value="1"/>
</dbReference>
<dbReference type="Gene3D" id="3.30.559.10">
    <property type="entry name" value="Chloramphenicol acetyltransferase-like domain"/>
    <property type="match status" value="1"/>
</dbReference>
<dbReference type="Gene3D" id="4.10.320.10">
    <property type="entry name" value="E3-binding domain"/>
    <property type="match status" value="1"/>
</dbReference>
<dbReference type="InterPro" id="IPR003016">
    <property type="entry name" value="2-oxoA_DH_lipoyl-BS"/>
</dbReference>
<dbReference type="InterPro" id="IPR050537">
    <property type="entry name" value="2-oxoacid_dehydrogenase"/>
</dbReference>
<dbReference type="InterPro" id="IPR001078">
    <property type="entry name" value="2-oxoacid_DH_actylTfrase"/>
</dbReference>
<dbReference type="InterPro" id="IPR000089">
    <property type="entry name" value="Biotin_lipoyl"/>
</dbReference>
<dbReference type="InterPro" id="IPR023213">
    <property type="entry name" value="CAT-like_dom_sf"/>
</dbReference>
<dbReference type="InterPro" id="IPR036625">
    <property type="entry name" value="E3-bd_dom_sf"/>
</dbReference>
<dbReference type="InterPro" id="IPR004167">
    <property type="entry name" value="PSBD"/>
</dbReference>
<dbReference type="InterPro" id="IPR011053">
    <property type="entry name" value="Single_hybrid_motif"/>
</dbReference>
<dbReference type="InterPro" id="IPR006255">
    <property type="entry name" value="SucB"/>
</dbReference>
<dbReference type="NCBIfam" id="NF004309">
    <property type="entry name" value="PRK05704.1"/>
    <property type="match status" value="1"/>
</dbReference>
<dbReference type="NCBIfam" id="TIGR01347">
    <property type="entry name" value="sucB"/>
    <property type="match status" value="1"/>
</dbReference>
<dbReference type="PANTHER" id="PTHR43416:SF5">
    <property type="entry name" value="DIHYDROLIPOYLLYSINE-RESIDUE SUCCINYLTRANSFERASE COMPONENT OF 2-OXOGLUTARATE DEHYDROGENASE COMPLEX, MITOCHONDRIAL"/>
    <property type="match status" value="1"/>
</dbReference>
<dbReference type="PANTHER" id="PTHR43416">
    <property type="entry name" value="DIHYDROLIPOYLLYSINE-RESIDUE SUCCINYLTRANSFERASE COMPONENT OF 2-OXOGLUTARATE DEHYDROGENASE COMPLEX, MITOCHONDRIAL-RELATED"/>
    <property type="match status" value="1"/>
</dbReference>
<dbReference type="Pfam" id="PF00198">
    <property type="entry name" value="2-oxoacid_dh"/>
    <property type="match status" value="1"/>
</dbReference>
<dbReference type="Pfam" id="PF00364">
    <property type="entry name" value="Biotin_lipoyl"/>
    <property type="match status" value="1"/>
</dbReference>
<dbReference type="Pfam" id="PF02817">
    <property type="entry name" value="E3_binding"/>
    <property type="match status" value="1"/>
</dbReference>
<dbReference type="SUPFAM" id="SSF52777">
    <property type="entry name" value="CoA-dependent acyltransferases"/>
    <property type="match status" value="1"/>
</dbReference>
<dbReference type="SUPFAM" id="SSF47005">
    <property type="entry name" value="Peripheral subunit-binding domain of 2-oxo acid dehydrogenase complex"/>
    <property type="match status" value="1"/>
</dbReference>
<dbReference type="SUPFAM" id="SSF51230">
    <property type="entry name" value="Single hybrid motif"/>
    <property type="match status" value="1"/>
</dbReference>
<dbReference type="PROSITE" id="PS50968">
    <property type="entry name" value="BIOTINYL_LIPOYL"/>
    <property type="match status" value="1"/>
</dbReference>
<dbReference type="PROSITE" id="PS00189">
    <property type="entry name" value="LIPOYL"/>
    <property type="match status" value="1"/>
</dbReference>
<dbReference type="PROSITE" id="PS51826">
    <property type="entry name" value="PSBD"/>
    <property type="match status" value="1"/>
</dbReference>
<keyword id="KW-0012">Acyltransferase</keyword>
<keyword id="KW-0450">Lipoyl</keyword>
<keyword id="KW-1185">Reference proteome</keyword>
<keyword id="KW-0808">Transferase</keyword>
<keyword id="KW-0816">Tricarboxylic acid cycle</keyword>
<reference key="1">
    <citation type="journal article" date="2000" name="Nature">
        <title>Complete genome sequence of Pseudomonas aeruginosa PAO1, an opportunistic pathogen.</title>
        <authorList>
            <person name="Stover C.K."/>
            <person name="Pham X.-Q.T."/>
            <person name="Erwin A.L."/>
            <person name="Mizoguchi S.D."/>
            <person name="Warrener P."/>
            <person name="Hickey M.J."/>
            <person name="Brinkman F.S.L."/>
            <person name="Hufnagle W.O."/>
            <person name="Kowalik D.J."/>
            <person name="Lagrou M."/>
            <person name="Garber R.L."/>
            <person name="Goltry L."/>
            <person name="Tolentino E."/>
            <person name="Westbrock-Wadman S."/>
            <person name="Yuan Y."/>
            <person name="Brody L.L."/>
            <person name="Coulter S.N."/>
            <person name="Folger K.R."/>
            <person name="Kas A."/>
            <person name="Larbig K."/>
            <person name="Lim R.M."/>
            <person name="Smith K.A."/>
            <person name="Spencer D.H."/>
            <person name="Wong G.K.-S."/>
            <person name="Wu Z."/>
            <person name="Paulsen I.T."/>
            <person name="Reizer J."/>
            <person name="Saier M.H. Jr."/>
            <person name="Hancock R.E.W."/>
            <person name="Lory S."/>
            <person name="Olson M.V."/>
        </authorList>
    </citation>
    <scope>NUCLEOTIDE SEQUENCE [LARGE SCALE GENOMIC DNA]</scope>
    <source>
        <strain>ATCC 15692 / DSM 22644 / CIP 104116 / JCM 14847 / LMG 12228 / 1C / PRS 101 / PAO1</strain>
    </source>
</reference>
<name>ODO2_PSEAE</name>
<comment type="function">
    <text evidence="2">E2 component of the 2-oxoglutarate dehydrogenase (OGDH) complex which catalyzes the second step in the conversion of 2-oxoglutarate to succinyl-CoA and CO(2).</text>
</comment>
<comment type="catalytic activity">
    <reaction evidence="2">
        <text>N(6)-[(R)-dihydrolipoyl]-L-lysyl-[protein] + succinyl-CoA = N(6)-[(R)-S(8)-succinyldihydrolipoyl]-L-lysyl-[protein] + CoA</text>
        <dbReference type="Rhea" id="RHEA:15213"/>
        <dbReference type="Rhea" id="RHEA-COMP:10475"/>
        <dbReference type="Rhea" id="RHEA-COMP:20092"/>
        <dbReference type="ChEBI" id="CHEBI:57287"/>
        <dbReference type="ChEBI" id="CHEBI:57292"/>
        <dbReference type="ChEBI" id="CHEBI:83100"/>
        <dbReference type="ChEBI" id="CHEBI:83120"/>
        <dbReference type="EC" id="2.3.1.61"/>
    </reaction>
</comment>
<comment type="cofactor">
    <cofactor evidence="1">
        <name>(R)-lipoate</name>
        <dbReference type="ChEBI" id="CHEBI:83088"/>
    </cofactor>
    <text evidence="1">Binds 1 lipoyl cofactor covalently.</text>
</comment>
<comment type="pathway">
    <text>Amino-acid degradation; L-lysine degradation via saccharopine pathway; glutaryl-CoA from L-lysine: step 6/6.</text>
</comment>
<comment type="subunit">
    <text evidence="2">Forms a 24-polypeptide structural core with octahedral symmetry. Part of the 2-oxoglutarate dehydrogenase (OGDH) complex composed of E1 (2-oxoglutarate dehydrogenase), E2 (dihydrolipoamide succinyltransferase) and E3 (dihydrolipoamide dehydrogenase); the complex contains multiple copies of the three enzymatic components (E1, E2 and E3).</text>
</comment>
<comment type="similarity">
    <text evidence="5">Belongs to the 2-oxoacid dehydrogenase family.</text>
</comment>
<accession>Q9I3D2</accession>